<protein>
    <recommendedName>
        <fullName>Probable inositol transporter 2</fullName>
    </recommendedName>
</protein>
<reference key="1">
    <citation type="journal article" date="2006" name="Plant Physiol.">
        <title>Arabidopsis INOSITOL TRANSPORTER4 mediates high-affinity H+ symport of myoinositol across the plasma membrane.</title>
        <authorList>
            <person name="Schneider S."/>
            <person name="Schneidereit A."/>
            <person name="Konrad K.R."/>
            <person name="Hajirezaei M.-R."/>
            <person name="Gramann M."/>
            <person name="Hedrich R."/>
            <person name="Sauer N."/>
        </authorList>
    </citation>
    <scope>NUCLEOTIDE SEQUENCE [MRNA]</scope>
</reference>
<reference key="2">
    <citation type="journal article" date="2000" name="Nature">
        <title>Sequence and analysis of chromosome 1 of the plant Arabidopsis thaliana.</title>
        <authorList>
            <person name="Theologis A."/>
            <person name="Ecker J.R."/>
            <person name="Palm C.J."/>
            <person name="Federspiel N.A."/>
            <person name="Kaul S."/>
            <person name="White O."/>
            <person name="Alonso J."/>
            <person name="Altafi H."/>
            <person name="Araujo R."/>
            <person name="Bowman C.L."/>
            <person name="Brooks S.Y."/>
            <person name="Buehler E."/>
            <person name="Chan A."/>
            <person name="Chao Q."/>
            <person name="Chen H."/>
            <person name="Cheuk R.F."/>
            <person name="Chin C.W."/>
            <person name="Chung M.K."/>
            <person name="Conn L."/>
            <person name="Conway A.B."/>
            <person name="Conway A.R."/>
            <person name="Creasy T.H."/>
            <person name="Dewar K."/>
            <person name="Dunn P."/>
            <person name="Etgu P."/>
            <person name="Feldblyum T.V."/>
            <person name="Feng J.-D."/>
            <person name="Fong B."/>
            <person name="Fujii C.Y."/>
            <person name="Gill J.E."/>
            <person name="Goldsmith A.D."/>
            <person name="Haas B."/>
            <person name="Hansen N.F."/>
            <person name="Hughes B."/>
            <person name="Huizar L."/>
            <person name="Hunter J.L."/>
            <person name="Jenkins J."/>
            <person name="Johnson-Hopson C."/>
            <person name="Khan S."/>
            <person name="Khaykin E."/>
            <person name="Kim C.J."/>
            <person name="Koo H.L."/>
            <person name="Kremenetskaia I."/>
            <person name="Kurtz D.B."/>
            <person name="Kwan A."/>
            <person name="Lam B."/>
            <person name="Langin-Hooper S."/>
            <person name="Lee A."/>
            <person name="Lee J.M."/>
            <person name="Lenz C.A."/>
            <person name="Li J.H."/>
            <person name="Li Y.-P."/>
            <person name="Lin X."/>
            <person name="Liu S.X."/>
            <person name="Liu Z.A."/>
            <person name="Luros J.S."/>
            <person name="Maiti R."/>
            <person name="Marziali A."/>
            <person name="Militscher J."/>
            <person name="Miranda M."/>
            <person name="Nguyen M."/>
            <person name="Nierman W.C."/>
            <person name="Osborne B.I."/>
            <person name="Pai G."/>
            <person name="Peterson J."/>
            <person name="Pham P.K."/>
            <person name="Rizzo M."/>
            <person name="Rooney T."/>
            <person name="Rowley D."/>
            <person name="Sakano H."/>
            <person name="Salzberg S.L."/>
            <person name="Schwartz J.R."/>
            <person name="Shinn P."/>
            <person name="Southwick A.M."/>
            <person name="Sun H."/>
            <person name="Tallon L.J."/>
            <person name="Tambunga G."/>
            <person name="Toriumi M.J."/>
            <person name="Town C.D."/>
            <person name="Utterback T."/>
            <person name="Van Aken S."/>
            <person name="Vaysberg M."/>
            <person name="Vysotskaia V.S."/>
            <person name="Walker M."/>
            <person name="Wu D."/>
            <person name="Yu G."/>
            <person name="Fraser C.M."/>
            <person name="Venter J.C."/>
            <person name="Davis R.W."/>
        </authorList>
    </citation>
    <scope>NUCLEOTIDE SEQUENCE [LARGE SCALE GENOMIC DNA]</scope>
    <source>
        <strain>cv. Columbia</strain>
    </source>
</reference>
<reference key="3">
    <citation type="journal article" date="2017" name="Plant J.">
        <title>Araport11: a complete reannotation of the Arabidopsis thaliana reference genome.</title>
        <authorList>
            <person name="Cheng C.Y."/>
            <person name="Krishnakumar V."/>
            <person name="Chan A.P."/>
            <person name="Thibaud-Nissen F."/>
            <person name="Schobel S."/>
            <person name="Town C.D."/>
        </authorList>
    </citation>
    <scope>GENOME REANNOTATION</scope>
    <source>
        <strain>cv. Columbia</strain>
    </source>
</reference>
<reference key="4">
    <citation type="journal article" date="2003" name="Science">
        <title>Empirical analysis of transcriptional activity in the Arabidopsis genome.</title>
        <authorList>
            <person name="Yamada K."/>
            <person name="Lim J."/>
            <person name="Dale J.M."/>
            <person name="Chen H."/>
            <person name="Shinn P."/>
            <person name="Palm C.J."/>
            <person name="Southwick A.M."/>
            <person name="Wu H.C."/>
            <person name="Kim C.J."/>
            <person name="Nguyen M."/>
            <person name="Pham P.K."/>
            <person name="Cheuk R.F."/>
            <person name="Karlin-Newmann G."/>
            <person name="Liu S.X."/>
            <person name="Lam B."/>
            <person name="Sakano H."/>
            <person name="Wu T."/>
            <person name="Yu G."/>
            <person name="Miranda M."/>
            <person name="Quach H.L."/>
            <person name="Tripp M."/>
            <person name="Chang C.H."/>
            <person name="Lee J.M."/>
            <person name="Toriumi M.J."/>
            <person name="Chan M.M."/>
            <person name="Tang C.C."/>
            <person name="Onodera C.S."/>
            <person name="Deng J.M."/>
            <person name="Akiyama K."/>
            <person name="Ansari Y."/>
            <person name="Arakawa T."/>
            <person name="Banh J."/>
            <person name="Banno F."/>
            <person name="Bowser L."/>
            <person name="Brooks S.Y."/>
            <person name="Carninci P."/>
            <person name="Chao Q."/>
            <person name="Choy N."/>
            <person name="Enju A."/>
            <person name="Goldsmith A.D."/>
            <person name="Gurjal M."/>
            <person name="Hansen N.F."/>
            <person name="Hayashizaki Y."/>
            <person name="Johnson-Hopson C."/>
            <person name="Hsuan V.W."/>
            <person name="Iida K."/>
            <person name="Karnes M."/>
            <person name="Khan S."/>
            <person name="Koesema E."/>
            <person name="Ishida J."/>
            <person name="Jiang P.X."/>
            <person name="Jones T."/>
            <person name="Kawai J."/>
            <person name="Kamiya A."/>
            <person name="Meyers C."/>
            <person name="Nakajima M."/>
            <person name="Narusaka M."/>
            <person name="Seki M."/>
            <person name="Sakurai T."/>
            <person name="Satou M."/>
            <person name="Tamse R."/>
            <person name="Vaysberg M."/>
            <person name="Wallender E.K."/>
            <person name="Wong C."/>
            <person name="Yamamura Y."/>
            <person name="Yuan S."/>
            <person name="Shinozaki K."/>
            <person name="Davis R.W."/>
            <person name="Theologis A."/>
            <person name="Ecker J.R."/>
        </authorList>
    </citation>
    <scope>NUCLEOTIDE SEQUENCE [LARGE SCALE MRNA]</scope>
    <source>
        <strain>cv. Columbia</strain>
    </source>
</reference>
<reference key="5">
    <citation type="journal article" date="2006" name="BMC Evol. Biol.">
        <title>The monosaccharide transporter gene family in land plants is ancient and shows differential subfamily expression and expansion across lineages.</title>
        <authorList>
            <person name="Johnson D.A."/>
            <person name="Hill J.P."/>
            <person name="Thomas M.A."/>
        </authorList>
    </citation>
    <scope>GENE FAMILY</scope>
</reference>
<reference key="6">
    <citation type="journal article" date="2007" name="Plant Physiol.">
        <title>Arabidopsis INOSITOL TRANSPORTER2 mediates H+ symport of different inositol epimers and derivatives across the plasma membrane.</title>
        <authorList>
            <person name="Schneider S."/>
            <person name="Schneidereit A."/>
            <person name="Udvardi P."/>
            <person name="Hammes U."/>
            <person name="Gramann M."/>
            <person name="Dietrich P."/>
            <person name="Sauer N."/>
        </authorList>
    </citation>
    <scope>FUNCTION</scope>
    <scope>SUBCELLULAR LOCATION</scope>
    <scope>BIOPHYSICOCHEMICAL PROPERTIES</scope>
    <scope>TISSUE SPECIFICITY</scope>
    <scope>DISRUPTION PHENOTYPE</scope>
    <source>
        <strain>cv. Columbia</strain>
    </source>
</reference>
<reference key="7">
    <citation type="journal article" date="2010" name="Traffic">
        <title>Novel PSI domains in plant and animal H+-inositol symporters.</title>
        <authorList>
            <person name="Dotzauer D."/>
            <person name="Wolfenstetter S."/>
            <person name="Eibert D."/>
            <person name="Schneider S."/>
            <person name="Dietrich P."/>
            <person name="Sauer N."/>
        </authorList>
    </citation>
    <scope>DOMAIN</scope>
    <scope>MUTAGENESIS OF CYS-399; CYS-402; CYS-410 AND CYS-413</scope>
    <scope>BIOPHYSICOCHEMICAL PROPERTIES</scope>
</reference>
<gene>
    <name type="primary">INT2</name>
    <name type="ordered locus">At1g30220</name>
    <name type="ORF">F12P21.2</name>
</gene>
<name>INT2_ARATH</name>
<keyword id="KW-1003">Cell membrane</keyword>
<keyword id="KW-0472">Membrane</keyword>
<keyword id="KW-1185">Reference proteome</keyword>
<keyword id="KW-0769">Symport</keyword>
<keyword id="KW-0812">Transmembrane</keyword>
<keyword id="KW-1133">Transmembrane helix</keyword>
<keyword id="KW-0813">Transport</keyword>
<proteinExistence type="evidence at protein level"/>
<sequence>MEGGIIHGGADESAFKECFSLTWKNPYVLRLAFSAGIGGLLFGYDTGVISGALLYIRDDFKSVDRNTWLQEMIVSMAVAGAIVGAAIGGWANDKLGRRSAILMADFLFLLGAIIMAAAPNPSLLVVGRVFVGLGVGMASMTAPLYISEASPAKIRGALVSTNGFLITGGQFLSYLINLAFTDVTGTWRWMLGIAGIPALLQFVLMFTLPESPRWLYRKGREEEAKAILRRIYSAEDVEQEIRALKDSVETEILEEGSSEKINMIKLCKAKTVRRGLIAGVGLQVFQQFVGINTVMYYSPTIVQLAGFASNRTALLLSLVTAGLNAFGSIISIYFIDRIGRKKLLIISLFGVIISLGILTGVFYEAATHAPAISSLETQRFNNISCPDYKSAMNTNAWDCMTCLKASSPSCGYCSSPIGKEHPGACWISDDSVKDLCHNENRLWYTRGCPSNFGWFALLGLGLYIIFFSPGMGTVPWIVNSEIYPLRFRGICGGIAATANWISNLIVAQSFLSLTEAIGTSWTFLIFGVISVIALLFVMVCVPETKGMPMEEIEKMLERRSMEFKFWKKKSKLVEKQNQSA</sequence>
<feature type="chain" id="PRO_0000259876" description="Probable inositol transporter 2">
    <location>
        <begin position="1"/>
        <end position="580"/>
    </location>
</feature>
<feature type="transmembrane region" description="Helical; Name=1" evidence="1">
    <location>
        <begin position="36"/>
        <end position="56"/>
    </location>
</feature>
<feature type="transmembrane region" description="Helical; Name=2" evidence="1">
    <location>
        <begin position="71"/>
        <end position="91"/>
    </location>
</feature>
<feature type="transmembrane region" description="Helical; Name=3" evidence="1">
    <location>
        <begin position="106"/>
        <end position="126"/>
    </location>
</feature>
<feature type="transmembrane region" description="Helical; Name=4" evidence="1">
    <location>
        <begin position="129"/>
        <end position="149"/>
    </location>
</feature>
<feature type="transmembrane region" description="Helical; Name=5" evidence="1">
    <location>
        <begin position="156"/>
        <end position="176"/>
    </location>
</feature>
<feature type="transmembrane region" description="Helical; Name=6" evidence="1">
    <location>
        <begin position="189"/>
        <end position="209"/>
    </location>
</feature>
<feature type="transmembrane region" description="Helical; Name=7" evidence="1">
    <location>
        <begin position="275"/>
        <end position="295"/>
    </location>
</feature>
<feature type="transmembrane region" description="Helical; Name=8" evidence="1">
    <location>
        <begin position="315"/>
        <end position="335"/>
    </location>
</feature>
<feature type="transmembrane region" description="Helical; Name=9" evidence="1">
    <location>
        <begin position="343"/>
        <end position="363"/>
    </location>
</feature>
<feature type="transmembrane region" description="Helical; Name=10" evidence="1">
    <location>
        <begin position="452"/>
        <end position="472"/>
    </location>
</feature>
<feature type="transmembrane region" description="Helical; Name=11" evidence="1">
    <location>
        <begin position="490"/>
        <end position="510"/>
    </location>
</feature>
<feature type="transmembrane region" description="Helical; Name=12" evidence="1">
    <location>
        <begin position="521"/>
        <end position="541"/>
    </location>
</feature>
<feature type="mutagenesis site" description="Strongly decreased nickel inhibition; when associated with A-402, A-410 and A-413." evidence="3">
    <original>C</original>
    <variation>A</variation>
    <location>
        <position position="399"/>
    </location>
</feature>
<feature type="mutagenesis site" description="No effect on inostol transport or nickel inhibition. No effect on inostol transport or nickel inhibition; when associated with S-410." evidence="3">
    <original>C</original>
    <variation>S</variation>
    <location>
        <position position="399"/>
    </location>
</feature>
<feature type="mutagenesis site" description="Strongly decreased nickel inhibition; when associated with A-399, A-410 and A-413." evidence="3">
    <original>C</original>
    <variation>A</variation>
    <location>
        <position position="402"/>
    </location>
</feature>
<feature type="mutagenesis site" description="Strongly decreased nickel inhibition; when associated with A-399, A-402 and A-413." evidence="3">
    <original>C</original>
    <variation>A</variation>
    <location>
        <position position="410"/>
    </location>
</feature>
<feature type="mutagenesis site" description="No effect on inostol transport or nickel inhibition; when associated with S-399." evidence="3">
    <original>C</original>
    <variation>S</variation>
    <location>
        <position position="410"/>
    </location>
</feature>
<feature type="mutagenesis site" description="Strongly decreased nickel inhibition; when associated with A-399, A-402 and A-410." evidence="3">
    <original>C</original>
    <variation>A</variation>
    <location>
        <position position="413"/>
    </location>
</feature>
<comment type="function">
    <text evidence="2">Plasma membrane inositol-proton symporter. Specific for several inositol epimers, such as myoinositol and scylloinositol. D-chiroinositol, mucoinositol, alloinositol and pinitol are also transported with a lower activity. Not active with galactinol and phytate.</text>
</comment>
<comment type="activity regulation">
    <text>Inhibited by nickel and to a lesser extent by cobalt.</text>
</comment>
<comment type="biophysicochemical properties">
    <kinetics>
        <KM evidence="2 3">1.16 mM for inositol</KM>
    </kinetics>
    <phDependence>
        <text evidence="2 3">Optimum pH is 5.5-7.0.</text>
    </phDependence>
</comment>
<comment type="subcellular location">
    <subcellularLocation>
        <location evidence="2">Cell membrane</location>
        <topology evidence="2">Multi-pass membrane protein</topology>
    </subcellularLocation>
</comment>
<comment type="tissue specificity">
    <text evidence="2">Expressed in the tapetum, but not in pollen grains. Detected in leaf vascular tissue and in roots.</text>
</comment>
<comment type="domain">
    <text evidence="3">The PSI domain (383-450) is not involved in the plasma membrane targeting and is dispensable for the transport function, but is required for the inhibition by nickel.</text>
</comment>
<comment type="disruption phenotype">
    <text evidence="2">No visible phenotype.</text>
</comment>
<comment type="similarity">
    <text evidence="4">Belongs to the major facilitator superfamily. Sugar transporter (TC 2.A.1.1) family.</text>
</comment>
<dbReference type="EMBL" id="AJ973176">
    <property type="protein sequence ID" value="CAJ00304.1"/>
    <property type="molecule type" value="mRNA"/>
</dbReference>
<dbReference type="EMBL" id="AC073506">
    <property type="protein sequence ID" value="AAG50560.1"/>
    <property type="molecule type" value="Genomic_DNA"/>
</dbReference>
<dbReference type="EMBL" id="CP002684">
    <property type="protein sequence ID" value="AEE31194.1"/>
    <property type="molecule type" value="Genomic_DNA"/>
</dbReference>
<dbReference type="EMBL" id="AY074333">
    <property type="protein sequence ID" value="AAL67029.1"/>
    <property type="molecule type" value="mRNA"/>
</dbReference>
<dbReference type="EMBL" id="AY123031">
    <property type="protein sequence ID" value="AAM67564.1"/>
    <property type="molecule type" value="mRNA"/>
</dbReference>
<dbReference type="PIR" id="D86426">
    <property type="entry name" value="D86426"/>
</dbReference>
<dbReference type="RefSeq" id="NP_174313.1">
    <property type="nucleotide sequence ID" value="NM_102761.4"/>
</dbReference>
<dbReference type="SMR" id="Q9C757"/>
<dbReference type="FunCoup" id="Q9C757">
    <property type="interactions" value="1088"/>
</dbReference>
<dbReference type="STRING" id="3702.Q9C757"/>
<dbReference type="TCDB" id="2.A.1.1.63">
    <property type="family name" value="the major facilitator superfamily (mfs)"/>
</dbReference>
<dbReference type="PaxDb" id="3702-AT1G30220.1"/>
<dbReference type="ProteomicsDB" id="248466"/>
<dbReference type="EnsemblPlants" id="AT1G30220.1">
    <property type="protein sequence ID" value="AT1G30220.1"/>
    <property type="gene ID" value="AT1G30220"/>
</dbReference>
<dbReference type="GeneID" id="839902"/>
<dbReference type="Gramene" id="AT1G30220.1">
    <property type="protein sequence ID" value="AT1G30220.1"/>
    <property type="gene ID" value="AT1G30220"/>
</dbReference>
<dbReference type="KEGG" id="ath:AT1G30220"/>
<dbReference type="Araport" id="AT1G30220"/>
<dbReference type="TAIR" id="AT1G30220">
    <property type="gene designation" value="INT2"/>
</dbReference>
<dbReference type="eggNOG" id="KOG0254">
    <property type="taxonomic scope" value="Eukaryota"/>
</dbReference>
<dbReference type="HOGENOM" id="CLU_001265_30_5_1"/>
<dbReference type="InParanoid" id="Q9C757"/>
<dbReference type="OMA" id="GFNAFMY"/>
<dbReference type="PhylomeDB" id="Q9C757"/>
<dbReference type="PRO" id="PR:Q9C757"/>
<dbReference type="Proteomes" id="UP000006548">
    <property type="component" value="Chromosome 1"/>
</dbReference>
<dbReference type="ExpressionAtlas" id="Q9C757">
    <property type="expression patterns" value="baseline and differential"/>
</dbReference>
<dbReference type="GO" id="GO:0005886">
    <property type="term" value="C:plasma membrane"/>
    <property type="evidence" value="ECO:0000314"/>
    <property type="project" value="TAIR"/>
</dbReference>
<dbReference type="GO" id="GO:0090406">
    <property type="term" value="C:pollen tube"/>
    <property type="evidence" value="ECO:0000304"/>
    <property type="project" value="TAIR"/>
</dbReference>
<dbReference type="GO" id="GO:0005366">
    <property type="term" value="F:myo-inositol:proton symporter activity"/>
    <property type="evidence" value="ECO:0000314"/>
    <property type="project" value="TAIR"/>
</dbReference>
<dbReference type="GO" id="GO:0015798">
    <property type="term" value="P:myo-inositol transport"/>
    <property type="evidence" value="ECO:0000314"/>
    <property type="project" value="TAIR"/>
</dbReference>
<dbReference type="GO" id="GO:0023052">
    <property type="term" value="P:signaling"/>
    <property type="evidence" value="ECO:0000304"/>
    <property type="project" value="TAIR"/>
</dbReference>
<dbReference type="CDD" id="cd17360">
    <property type="entry name" value="MFS_HMIT_like"/>
    <property type="match status" value="1"/>
</dbReference>
<dbReference type="FunFam" id="1.20.1250.20:FF:000121">
    <property type="entry name" value="Probable inositol transporter 2"/>
    <property type="match status" value="1"/>
</dbReference>
<dbReference type="FunFam" id="1.20.1250.20:FF:000137">
    <property type="entry name" value="Probable inositol transporter 2"/>
    <property type="match status" value="1"/>
</dbReference>
<dbReference type="Gene3D" id="1.20.1250.20">
    <property type="entry name" value="MFS general substrate transporter like domains"/>
    <property type="match status" value="2"/>
</dbReference>
<dbReference type="InterPro" id="IPR020846">
    <property type="entry name" value="MFS_dom"/>
</dbReference>
<dbReference type="InterPro" id="IPR005828">
    <property type="entry name" value="MFS_sugar_transport-like"/>
</dbReference>
<dbReference type="InterPro" id="IPR036259">
    <property type="entry name" value="MFS_trans_sf"/>
</dbReference>
<dbReference type="InterPro" id="IPR050814">
    <property type="entry name" value="Myo-inositol_Transporter"/>
</dbReference>
<dbReference type="InterPro" id="IPR003663">
    <property type="entry name" value="Sugar/inositol_transpt"/>
</dbReference>
<dbReference type="InterPro" id="IPR005829">
    <property type="entry name" value="Sugar_transporter_CS"/>
</dbReference>
<dbReference type="NCBIfam" id="TIGR00879">
    <property type="entry name" value="SP"/>
    <property type="match status" value="1"/>
</dbReference>
<dbReference type="PANTHER" id="PTHR48020:SF38">
    <property type="entry name" value="INOSITOL TRANSPORTER 2-RELATED"/>
    <property type="match status" value="1"/>
</dbReference>
<dbReference type="PANTHER" id="PTHR48020">
    <property type="entry name" value="PROTON MYO-INOSITOL COTRANSPORTER"/>
    <property type="match status" value="1"/>
</dbReference>
<dbReference type="Pfam" id="PF00083">
    <property type="entry name" value="Sugar_tr"/>
    <property type="match status" value="2"/>
</dbReference>
<dbReference type="PRINTS" id="PR00171">
    <property type="entry name" value="SUGRTRNSPORT"/>
</dbReference>
<dbReference type="SUPFAM" id="SSF103473">
    <property type="entry name" value="MFS general substrate transporter"/>
    <property type="match status" value="1"/>
</dbReference>
<dbReference type="PROSITE" id="PS50850">
    <property type="entry name" value="MFS"/>
    <property type="match status" value="1"/>
</dbReference>
<dbReference type="PROSITE" id="PS00216">
    <property type="entry name" value="SUGAR_TRANSPORT_1"/>
    <property type="match status" value="1"/>
</dbReference>
<dbReference type="PROSITE" id="PS00217">
    <property type="entry name" value="SUGAR_TRANSPORT_2"/>
    <property type="match status" value="1"/>
</dbReference>
<accession>Q9C757</accession>
<evidence type="ECO:0000255" key="1"/>
<evidence type="ECO:0000269" key="2">
    <source>
    </source>
</evidence>
<evidence type="ECO:0000269" key="3">
    <source>
    </source>
</evidence>
<evidence type="ECO:0000305" key="4"/>
<organism>
    <name type="scientific">Arabidopsis thaliana</name>
    <name type="common">Mouse-ear cress</name>
    <dbReference type="NCBI Taxonomy" id="3702"/>
    <lineage>
        <taxon>Eukaryota</taxon>
        <taxon>Viridiplantae</taxon>
        <taxon>Streptophyta</taxon>
        <taxon>Embryophyta</taxon>
        <taxon>Tracheophyta</taxon>
        <taxon>Spermatophyta</taxon>
        <taxon>Magnoliopsida</taxon>
        <taxon>eudicotyledons</taxon>
        <taxon>Gunneridae</taxon>
        <taxon>Pentapetalae</taxon>
        <taxon>rosids</taxon>
        <taxon>malvids</taxon>
        <taxon>Brassicales</taxon>
        <taxon>Brassicaceae</taxon>
        <taxon>Camelineae</taxon>
        <taxon>Arabidopsis</taxon>
    </lineage>
</organism>